<protein>
    <recommendedName>
        <fullName>DNA polymerase II large subunit</fullName>
        <shortName>Pol II</shortName>
        <ecNumber evidence="3">2.7.7.7</ecNumber>
    </recommendedName>
    <alternativeName>
        <fullName evidence="3">Exodeoxyribonuclease large subunit</fullName>
        <ecNumber evidence="3">3.1.11.1</ecNumber>
    </alternativeName>
    <component>
        <recommendedName>
            <fullName>Pho polC intein</fullName>
        </recommendedName>
        <alternativeName>
            <fullName>Pho pol II intein</fullName>
        </alternativeName>
    </component>
</protein>
<organism>
    <name type="scientific">Pyrococcus horikoshii (strain ATCC 700860 / DSM 12428 / JCM 9974 / NBRC 100139 / OT-3)</name>
    <dbReference type="NCBI Taxonomy" id="70601"/>
    <lineage>
        <taxon>Archaea</taxon>
        <taxon>Methanobacteriati</taxon>
        <taxon>Methanobacteriota</taxon>
        <taxon>Thermococci</taxon>
        <taxon>Thermococcales</taxon>
        <taxon>Thermococcaceae</taxon>
        <taxon>Pyrococcus</taxon>
    </lineage>
</organism>
<name>DP2L_PYRHO</name>
<feature type="chain" id="PRO_0000007307" description="DNA polymerase II large subunit, 1st part" evidence="2">
    <location>
        <begin position="1"/>
        <end position="951"/>
    </location>
</feature>
<feature type="chain" id="PRO_0000007308" description="Pho polC intein" evidence="2">
    <location>
        <begin position="952"/>
        <end position="1117"/>
    </location>
</feature>
<feature type="chain" id="PRO_0000007309" description="DNA polymerase II large subunit, 2nd part" evidence="2">
    <location>
        <begin position="1118"/>
        <end position="1431"/>
    </location>
</feature>
<feature type="region of interest" description="Disordered" evidence="4">
    <location>
        <begin position="1388"/>
        <end position="1431"/>
    </location>
</feature>
<feature type="compositionally biased region" description="Basic and acidic residues" evidence="4">
    <location>
        <begin position="1399"/>
        <end position="1415"/>
    </location>
</feature>
<feature type="helix" evidence="6">
    <location>
        <begin position="47"/>
        <end position="55"/>
    </location>
</feature>
<feature type="helix" evidence="6">
    <location>
        <begin position="60"/>
        <end position="71"/>
    </location>
</feature>
<feature type="helix" evidence="6">
    <location>
        <begin position="73"/>
        <end position="86"/>
    </location>
</feature>
<feature type="turn" evidence="6">
    <location>
        <begin position="87"/>
        <end position="89"/>
    </location>
</feature>
<feature type="helix" evidence="6">
    <location>
        <begin position="95"/>
        <end position="110"/>
    </location>
</feature>
<feature type="turn" evidence="6">
    <location>
        <begin position="111"/>
        <end position="113"/>
    </location>
</feature>
<feature type="helix" evidence="6">
    <location>
        <begin position="117"/>
        <end position="121"/>
    </location>
</feature>
<feature type="strand" evidence="6">
    <location>
        <begin position="122"/>
        <end position="129"/>
    </location>
</feature>
<feature type="turn" evidence="6">
    <location>
        <begin position="131"/>
        <end position="134"/>
    </location>
</feature>
<feature type="strand" evidence="6">
    <location>
        <begin position="137"/>
        <end position="143"/>
    </location>
</feature>
<feature type="helix" evidence="6">
    <location>
        <begin position="145"/>
        <end position="149"/>
    </location>
</feature>
<feature type="helix" evidence="6">
    <location>
        <begin position="152"/>
        <end position="168"/>
    </location>
</feature>
<feature type="helix" evidence="6">
    <location>
        <begin position="178"/>
        <end position="194"/>
    </location>
</feature>
<feature type="helix" evidence="6">
    <location>
        <begin position="204"/>
        <end position="213"/>
    </location>
</feature>
<feature type="strand" evidence="6">
    <location>
        <begin position="215"/>
        <end position="220"/>
    </location>
</feature>
<feature type="helix" evidence="6">
    <location>
        <begin position="243"/>
        <end position="250"/>
    </location>
</feature>
<feature type="turn" evidence="6">
    <location>
        <begin position="251"/>
        <end position="256"/>
    </location>
</feature>
<feature type="helix" evidence="6">
    <location>
        <begin position="257"/>
        <end position="267"/>
    </location>
</feature>
<feature type="helix" evidence="6">
    <location>
        <begin position="273"/>
        <end position="284"/>
    </location>
</feature>
<feature type="strand" evidence="8">
    <location>
        <begin position="958"/>
        <end position="963"/>
    </location>
</feature>
<feature type="strand" evidence="8">
    <location>
        <begin position="966"/>
        <end position="971"/>
    </location>
</feature>
<feature type="helix" evidence="8">
    <location>
        <begin position="972"/>
        <end position="977"/>
    </location>
</feature>
<feature type="strand" evidence="8">
    <location>
        <begin position="982"/>
        <end position="985"/>
    </location>
</feature>
<feature type="strand" evidence="8">
    <location>
        <begin position="988"/>
        <end position="991"/>
    </location>
</feature>
<feature type="strand" evidence="7">
    <location>
        <begin position="993"/>
        <end position="996"/>
    </location>
</feature>
<feature type="strand" evidence="8">
    <location>
        <begin position="998"/>
        <end position="1004"/>
    </location>
</feature>
<feature type="turn" evidence="8">
    <location>
        <begin position="1005"/>
        <end position="1008"/>
    </location>
</feature>
<feature type="strand" evidence="8">
    <location>
        <begin position="1009"/>
        <end position="1013"/>
    </location>
</feature>
<feature type="strand" evidence="8">
    <location>
        <begin position="1015"/>
        <end position="1022"/>
    </location>
</feature>
<feature type="strand" evidence="8">
    <location>
        <begin position="1027"/>
        <end position="1032"/>
    </location>
</feature>
<feature type="helix" evidence="7">
    <location>
        <begin position="1033"/>
        <end position="1035"/>
    </location>
</feature>
<feature type="strand" evidence="8">
    <location>
        <begin position="1037"/>
        <end position="1041"/>
    </location>
</feature>
<feature type="strand" evidence="8">
    <location>
        <begin position="1045"/>
        <end position="1050"/>
    </location>
</feature>
<feature type="strand" evidence="8">
    <location>
        <begin position="1053"/>
        <end position="1058"/>
    </location>
</feature>
<feature type="helix" evidence="8">
    <location>
        <begin position="1059"/>
        <end position="1061"/>
    </location>
</feature>
<feature type="strand" evidence="8">
    <location>
        <begin position="1067"/>
        <end position="1071"/>
    </location>
</feature>
<feature type="turn" evidence="8">
    <location>
        <begin position="1073"/>
        <end position="1075"/>
    </location>
</feature>
<feature type="strand" evidence="8">
    <location>
        <begin position="1078"/>
        <end position="1089"/>
    </location>
</feature>
<feature type="strand" evidence="8">
    <location>
        <begin position="1093"/>
        <end position="1101"/>
    </location>
</feature>
<feature type="turn" evidence="8">
    <location>
        <begin position="1102"/>
        <end position="1104"/>
    </location>
</feature>
<feature type="strand" evidence="8">
    <location>
        <begin position="1106"/>
        <end position="1109"/>
    </location>
</feature>
<feature type="turn" evidence="8">
    <location>
        <begin position="1110"/>
        <end position="1112"/>
    </location>
</feature>
<feature type="strand" evidence="8">
    <location>
        <begin position="1113"/>
        <end position="1116"/>
    </location>
</feature>
<reference key="1">
    <citation type="journal article" date="1998" name="DNA Res.">
        <title>Complete sequence and gene organization of the genome of a hyper-thermophilic archaebacterium, Pyrococcus horikoshii OT3.</title>
        <authorList>
            <person name="Kawarabayasi Y."/>
            <person name="Sawada M."/>
            <person name="Horikawa H."/>
            <person name="Haikawa Y."/>
            <person name="Hino Y."/>
            <person name="Yamamoto S."/>
            <person name="Sekine M."/>
            <person name="Baba S."/>
            <person name="Kosugi H."/>
            <person name="Hosoyama A."/>
            <person name="Nagai Y."/>
            <person name="Sakai M."/>
            <person name="Ogura K."/>
            <person name="Otsuka R."/>
            <person name="Nakazawa H."/>
            <person name="Takamiya M."/>
            <person name="Ohfuku Y."/>
            <person name="Funahashi T."/>
            <person name="Tanaka T."/>
            <person name="Kudoh Y."/>
            <person name="Yamazaki J."/>
            <person name="Kushida N."/>
            <person name="Oguchi A."/>
            <person name="Aoki K."/>
            <person name="Yoshizawa T."/>
            <person name="Nakamura Y."/>
            <person name="Robb F.T."/>
            <person name="Horikoshi K."/>
            <person name="Masuchi Y."/>
            <person name="Shizuya H."/>
            <person name="Kikuchi H."/>
        </authorList>
    </citation>
    <scope>NUCLEOTIDE SEQUENCE [LARGE SCALE GENOMIC DNA]</scope>
    <source>
        <strain>ATCC 700860 / DSM 12428 / JCM 9974 / NBRC 100139 / OT-3</strain>
    </source>
</reference>
<gene>
    <name type="primary">polC</name>
    <name type="ordered locus">PH0121</name>
</gene>
<comment type="function">
    <text evidence="1">Possesses two activities: a DNA synthesis (polymerase) and an exonucleolytic activity that degrades single-stranded DNA in the 3'- to 5'-direction. Has a template-primer preference which is characteristic of a replicative DNA polymerase (By similarity).</text>
</comment>
<comment type="catalytic activity">
    <reaction>
        <text>DNA(n) + a 2'-deoxyribonucleoside 5'-triphosphate = DNA(n+1) + diphosphate</text>
        <dbReference type="Rhea" id="RHEA:22508"/>
        <dbReference type="Rhea" id="RHEA-COMP:17339"/>
        <dbReference type="Rhea" id="RHEA-COMP:17340"/>
        <dbReference type="ChEBI" id="CHEBI:33019"/>
        <dbReference type="ChEBI" id="CHEBI:61560"/>
        <dbReference type="ChEBI" id="CHEBI:173112"/>
        <dbReference type="EC" id="2.7.7.7"/>
    </reaction>
</comment>
<comment type="catalytic activity">
    <reaction evidence="3">
        <text>Exonucleolytic cleavage in the 3'- to 5'-direction to yield nucleoside 5'-phosphates.</text>
        <dbReference type="EC" id="3.1.11.1"/>
    </reaction>
</comment>
<comment type="subunit">
    <text evidence="1">Heterodimer of a large subunit and a small subunit.</text>
</comment>
<comment type="interaction">
    <interactant intactId="EBI-8553242">
        <id>O57861</id>
    </interactant>
    <interactant intactId="EBI-8553242">
        <id>O57861</id>
        <label>polC</label>
    </interactant>
    <organismsDiffer>false</organismsDiffer>
    <experiments>3</experiments>
</comment>
<comment type="PTM">
    <text evidence="5">This protein undergoes a protein self splicing that involves a post-translational excision of the intervening region (intein) followed by peptide ligation.</text>
</comment>
<comment type="similarity">
    <text evidence="5">Belongs to the archaeal DNA polymerase II family.</text>
</comment>
<comment type="sequence caution" evidence="5">
    <conflict type="erroneous initiation">
        <sequence resource="EMBL-CDS" id="BAA29190"/>
    </conflict>
</comment>
<proteinExistence type="evidence at protein level"/>
<keyword id="KW-0002">3D-structure</keyword>
<keyword id="KW-0068">Autocatalytic cleavage</keyword>
<keyword id="KW-0235">DNA replication</keyword>
<keyword id="KW-0238">DNA-binding</keyword>
<keyword id="KW-0239">DNA-directed DNA polymerase</keyword>
<keyword id="KW-0269">Exonuclease</keyword>
<keyword id="KW-0378">Hydrolase</keyword>
<keyword id="KW-0511">Multifunctional enzyme</keyword>
<keyword id="KW-0540">Nuclease</keyword>
<keyword id="KW-0548">Nucleotidyltransferase</keyword>
<keyword id="KW-0651">Protein splicing</keyword>
<keyword id="KW-0808">Transferase</keyword>
<accession>O57861</accession>
<dbReference type="EC" id="2.7.7.7" evidence="3"/>
<dbReference type="EC" id="3.1.11.1" evidence="3"/>
<dbReference type="EMBL" id="BA000001">
    <property type="protein sequence ID" value="BAA29190.1"/>
    <property type="status" value="ALT_INIT"/>
    <property type="molecule type" value="Genomic_DNA"/>
</dbReference>
<dbReference type="PIR" id="G71232">
    <property type="entry name" value="G71232"/>
</dbReference>
<dbReference type="RefSeq" id="WP_048053037.1">
    <property type="nucleotide sequence ID" value="NC_000961.1"/>
</dbReference>
<dbReference type="PDB" id="3O59">
    <property type="method" value="X-ray"/>
    <property type="resolution" value="2.20 A"/>
    <property type="chains" value="X=1-297"/>
</dbReference>
<dbReference type="PDB" id="5BKH">
    <property type="method" value="X-ray"/>
    <property type="resolution" value="2.43 A"/>
    <property type="chains" value="A=944-1123"/>
</dbReference>
<dbReference type="PDB" id="7OEC">
    <property type="method" value="X-ray"/>
    <property type="resolution" value="1.48 A"/>
    <property type="chains" value="A=951-1117"/>
</dbReference>
<dbReference type="PDBsum" id="3O59"/>
<dbReference type="PDBsum" id="5BKH"/>
<dbReference type="PDBsum" id="7OEC"/>
<dbReference type="SMR" id="O57861"/>
<dbReference type="MINT" id="O57861"/>
<dbReference type="STRING" id="70601.gene:9377029"/>
<dbReference type="MEROPS" id="N10.005"/>
<dbReference type="EnsemblBacteria" id="BAA29190">
    <property type="protein sequence ID" value="BAA29190"/>
    <property type="gene ID" value="BAA29190"/>
</dbReference>
<dbReference type="GeneID" id="1444018"/>
<dbReference type="KEGG" id="pho:PH0121"/>
<dbReference type="eggNOG" id="arCOG04447">
    <property type="taxonomic scope" value="Archaea"/>
</dbReference>
<dbReference type="OrthoDB" id="7529at2157"/>
<dbReference type="BRENDA" id="2.7.7.7">
    <property type="organism ID" value="5244"/>
</dbReference>
<dbReference type="EvolutionaryTrace" id="O57861"/>
<dbReference type="Proteomes" id="UP000000752">
    <property type="component" value="Chromosome"/>
</dbReference>
<dbReference type="GO" id="GO:0003677">
    <property type="term" value="F:DNA binding"/>
    <property type="evidence" value="ECO:0007669"/>
    <property type="project" value="UniProtKB-UniRule"/>
</dbReference>
<dbReference type="GO" id="GO:0003887">
    <property type="term" value="F:DNA-directed DNA polymerase activity"/>
    <property type="evidence" value="ECO:0007669"/>
    <property type="project" value="UniProtKB-UniRule"/>
</dbReference>
<dbReference type="GO" id="GO:0042802">
    <property type="term" value="F:identical protein binding"/>
    <property type="evidence" value="ECO:0000353"/>
    <property type="project" value="IntAct"/>
</dbReference>
<dbReference type="GO" id="GO:0008310">
    <property type="term" value="F:single-stranded DNA 3'-5' DNA exonuclease activity"/>
    <property type="evidence" value="ECO:0007669"/>
    <property type="project" value="UniProtKB-EC"/>
</dbReference>
<dbReference type="GO" id="GO:0006308">
    <property type="term" value="P:DNA catabolic process"/>
    <property type="evidence" value="ECO:0007669"/>
    <property type="project" value="UniProtKB-UniRule"/>
</dbReference>
<dbReference type="GO" id="GO:0006261">
    <property type="term" value="P:DNA-templated DNA replication"/>
    <property type="evidence" value="ECO:0007669"/>
    <property type="project" value="UniProtKB-UniRule"/>
</dbReference>
<dbReference type="GO" id="GO:0016539">
    <property type="term" value="P:intein-mediated protein splicing"/>
    <property type="evidence" value="ECO:0007669"/>
    <property type="project" value="InterPro"/>
</dbReference>
<dbReference type="CDD" id="cd00081">
    <property type="entry name" value="Hint"/>
    <property type="match status" value="1"/>
</dbReference>
<dbReference type="CDD" id="cd00085">
    <property type="entry name" value="HNHc"/>
    <property type="match status" value="1"/>
</dbReference>
<dbReference type="Gene3D" id="2.170.16.10">
    <property type="entry name" value="Hedgehog/Intein (Hint) domain"/>
    <property type="match status" value="1"/>
</dbReference>
<dbReference type="HAMAP" id="MF_00324">
    <property type="entry name" value="DNApol_II_L_arch"/>
    <property type="match status" value="1"/>
</dbReference>
<dbReference type="InterPro" id="IPR003586">
    <property type="entry name" value="Hint_dom_C"/>
</dbReference>
<dbReference type="InterPro" id="IPR003587">
    <property type="entry name" value="Hint_dom_N"/>
</dbReference>
<dbReference type="InterPro" id="IPR036844">
    <property type="entry name" value="Hint_dom_sf"/>
</dbReference>
<dbReference type="InterPro" id="IPR003615">
    <property type="entry name" value="HNH_nuc"/>
</dbReference>
<dbReference type="InterPro" id="IPR030934">
    <property type="entry name" value="Intein_C"/>
</dbReference>
<dbReference type="InterPro" id="IPR006141">
    <property type="entry name" value="Intein_N"/>
</dbReference>
<dbReference type="InterPro" id="IPR004475">
    <property type="entry name" value="PolC_DP2"/>
</dbReference>
<dbReference type="InterPro" id="IPR056172">
    <property type="entry name" value="PolC_DP2_cat_dom"/>
</dbReference>
<dbReference type="InterPro" id="IPR056171">
    <property type="entry name" value="PolC_DP2_central_dom"/>
</dbReference>
<dbReference type="InterPro" id="IPR016033">
    <property type="entry name" value="PolC_DP2_N"/>
</dbReference>
<dbReference type="NCBIfam" id="TIGR01445">
    <property type="entry name" value="intein_Nterm"/>
    <property type="match status" value="1"/>
</dbReference>
<dbReference type="NCBIfam" id="TIGR00354">
    <property type="entry name" value="polC"/>
    <property type="match status" value="1"/>
</dbReference>
<dbReference type="NCBIfam" id="NF003103">
    <property type="entry name" value="PRK04023.1"/>
    <property type="match status" value="1"/>
</dbReference>
<dbReference type="NCBIfam" id="NF011302">
    <property type="entry name" value="PRK14714.1"/>
    <property type="match status" value="1"/>
</dbReference>
<dbReference type="NCBIfam" id="NF011303">
    <property type="entry name" value="PRK14715.1"/>
    <property type="match status" value="1"/>
</dbReference>
<dbReference type="PANTHER" id="PTHR42210">
    <property type="entry name" value="DNA POLYMERASE II LARGE SUBUNIT"/>
    <property type="match status" value="1"/>
</dbReference>
<dbReference type="PANTHER" id="PTHR42210:SF1">
    <property type="entry name" value="DNA POLYMERASE II LARGE SUBUNIT"/>
    <property type="match status" value="1"/>
</dbReference>
<dbReference type="Pfam" id="PF14890">
    <property type="entry name" value="Intein_splicing"/>
    <property type="match status" value="1"/>
</dbReference>
<dbReference type="Pfam" id="PF24846">
    <property type="entry name" value="PolC_DP2_cat"/>
    <property type="match status" value="2"/>
</dbReference>
<dbReference type="Pfam" id="PF24844">
    <property type="entry name" value="PolC_DP2_central"/>
    <property type="match status" value="1"/>
</dbReference>
<dbReference type="Pfam" id="PF03833">
    <property type="entry name" value="PolC_DP2_N"/>
    <property type="match status" value="1"/>
</dbReference>
<dbReference type="SMART" id="SM00305">
    <property type="entry name" value="HintC"/>
    <property type="match status" value="1"/>
</dbReference>
<dbReference type="SMART" id="SM00306">
    <property type="entry name" value="HintN"/>
    <property type="match status" value="1"/>
</dbReference>
<dbReference type="SUPFAM" id="SSF51294">
    <property type="entry name" value="Hedgehog/intein (Hint) domain"/>
    <property type="match status" value="1"/>
</dbReference>
<dbReference type="PROSITE" id="PS50818">
    <property type="entry name" value="INTEIN_C_TER"/>
    <property type="match status" value="1"/>
</dbReference>
<dbReference type="PROSITE" id="PS50817">
    <property type="entry name" value="INTEIN_N_TER"/>
    <property type="match status" value="1"/>
</dbReference>
<evidence type="ECO:0000250" key="1"/>
<evidence type="ECO:0000255" key="2"/>
<evidence type="ECO:0000255" key="3">
    <source>
        <dbReference type="HAMAP-Rule" id="MF_00324"/>
    </source>
</evidence>
<evidence type="ECO:0000256" key="4">
    <source>
        <dbReference type="SAM" id="MobiDB-lite"/>
    </source>
</evidence>
<evidence type="ECO:0000305" key="5"/>
<evidence type="ECO:0007829" key="6">
    <source>
        <dbReference type="PDB" id="3O59"/>
    </source>
</evidence>
<evidence type="ECO:0007829" key="7">
    <source>
        <dbReference type="PDB" id="5BKH"/>
    </source>
</evidence>
<evidence type="ECO:0007829" key="8">
    <source>
        <dbReference type="PDB" id="7OEC"/>
    </source>
</evidence>
<sequence>MELPKEMEEYFSMLQREIDKAYEIAKKARAQGKDPSLDVEIPQASDMAGRVESLVGPPGVAERIRELVKEYGKEIAALKIVDEIIDGKFGDLGSKEKYAEQAVRTALAILTEGVVSAPIEGIASVKIKRNTWSDNSEYLALYYAGPIRSSGGTAQALSVLVGDYVRRKLGLDRFKPSEKHIERMVEEVDLYHRTVSRLQYHPSPEEVRLAMRNIPIEITGEATDEVEVSHRDIPGVETNQLRGGAILVLAEGVLQKAKKLVKYIDKMGIEGWEWLKEFVEAKEKGEEIEEEGSAESTVEETKVEVDMGFYYSLYQKFKSEIAPNDKYAKEIIGGRPLFSDPSRNGGFRLRYGRSRVSGFATWGINPATMILVDEFLAIGTQLKTERPGKGAVVTPVTTIEGPIVKLKDGSVVKVDDYKLALKIRDEVEEILYLGDAVIAFGDFVENNQTLLPANYCEEWWILEFTKALNEIYEVELKPFEVNSSEDLEEAADYLEVDIEFLKELLKDPLRTKPPVELAIHFSEILGIPLHPYYTLYWNSVKPEQVEKLWRVLKEHAHIDWDNFRGIKFARRIVIPLEKLRDSKRALELLGLPHKVEGKNVIVDYPWAAALLTPLGNLEWEFRAKPLHTTIDIINENNEIKLRDRGISWIGARMGRPEKAKERKMKPPVQVLFPIGLAGGSSRDIKKAAEEGKVAEVEIALFKCPKCGHVGPEHICPNCGTRKELIWVCPRCNAEYPESQASGYNYTCPKCNVKLKPYAKRKIKPSELLKRAMDNVKVYGIDKLKGVMGMTSGWKMPEPLEKGLLRAKNDVYVFKDGTIRFDATDAPITHFRPREIGVSVEKLRELGYTHDFEGNPLVSEDQIVELKPQDIILSKEAGKYLLKVAKFVDDLLEKFYGLPRFYNAEKMEDLIGHLVIGLAPHTSAGIVGRIIGFVDALVGYAHPYFHAAKRRNCFPGDTRILVQINGTPQRVTLKELYELFDEEHYESMVYVRKKPKVDIKVYSFNPEEGKVVLTDIEEVIKAPATDHLIRFELELGSSFETTVDHPVLVYENGKFVEKRAFEVREGNIIIIIDESTLEPLKVAVKKIEFIEPPEDFVFSLNAKKYHTVIINENIVTHQCDGDEDAVMLLLDALLNFSRYYLPEKRGGKMDAPLVITTRLDPREVDSEVHNMDIVRYYPLEFYEATYELKSPKELVGVIERVEDRLGKPEMYYGLKFTHDTDDIALGPKMSLYKQLGDMEEKVKRQLDVARRIRAVDEHKVAETILNSHLIPDLRGNLRSFTRQEFRCVKCNTKFRRPPLDGKCPICGGKIVLTVSKGAIEKYLGTAKMLVTEYKVKNYTRQRICLTERDIDSLFETVFPETQLTLLVNPNDICQRIIMERTGGSKKSGLLENFANGYNKGKKEEMPKKQRKKEQEKSKKRKVISLDDFFSRK</sequence>